<evidence type="ECO:0000250" key="1"/>
<evidence type="ECO:0000250" key="2">
    <source>
        <dbReference type="UniProtKB" id="P20265"/>
    </source>
</evidence>
<evidence type="ECO:0000255" key="3">
    <source>
        <dbReference type="PROSITE-ProRule" id="PRU00108"/>
    </source>
</evidence>
<evidence type="ECO:0000255" key="4">
    <source>
        <dbReference type="PROSITE-ProRule" id="PRU00530"/>
    </source>
</evidence>
<evidence type="ECO:0000256" key="5">
    <source>
        <dbReference type="SAM" id="MobiDB-lite"/>
    </source>
</evidence>
<evidence type="ECO:0000305" key="6"/>
<comment type="function">
    <text evidence="1">Probable transcription factor which exert its primary action widely during early neural development and in a very limited set of neurons in the mature brain.</text>
</comment>
<comment type="subcellular location">
    <subcellularLocation>
        <location evidence="3 4">Nucleus</location>
    </subcellularLocation>
</comment>
<comment type="similarity">
    <text evidence="6">Belongs to the POU transcription factor family. Class-3 subfamily.</text>
</comment>
<dbReference type="EMBL" id="AF469664">
    <property type="protein sequence ID" value="AAO33434.1"/>
    <property type="molecule type" value="mRNA"/>
</dbReference>
<dbReference type="RefSeq" id="NP_001268751.1">
    <property type="nucleotide sequence ID" value="NM_001281822.1"/>
</dbReference>
<dbReference type="SMR" id="Q812B1"/>
<dbReference type="STRING" id="10036.ENSMAUP00000017991"/>
<dbReference type="Ensembl" id="ENSMAUT00000021949">
    <property type="protein sequence ID" value="ENSMAUP00000017991"/>
    <property type="gene ID" value="ENSMAUG00000016709"/>
</dbReference>
<dbReference type="GeneID" id="101829289"/>
<dbReference type="KEGG" id="maua:101829289"/>
<dbReference type="CTD" id="5456"/>
<dbReference type="eggNOG" id="KOG3802">
    <property type="taxonomic scope" value="Eukaryota"/>
</dbReference>
<dbReference type="OrthoDB" id="6358449at2759"/>
<dbReference type="Proteomes" id="UP000189706">
    <property type="component" value="Unplaced"/>
</dbReference>
<dbReference type="GO" id="GO:0005654">
    <property type="term" value="C:nucleoplasm"/>
    <property type="evidence" value="ECO:0007669"/>
    <property type="project" value="Ensembl"/>
</dbReference>
<dbReference type="GO" id="GO:0000981">
    <property type="term" value="F:DNA-binding transcription factor activity, RNA polymerase II-specific"/>
    <property type="evidence" value="ECO:0007669"/>
    <property type="project" value="InterPro"/>
</dbReference>
<dbReference type="GO" id="GO:0000978">
    <property type="term" value="F:RNA polymerase II cis-regulatory region sequence-specific DNA binding"/>
    <property type="evidence" value="ECO:0007669"/>
    <property type="project" value="TreeGrafter"/>
</dbReference>
<dbReference type="GO" id="GO:0090103">
    <property type="term" value="P:cochlea morphogenesis"/>
    <property type="evidence" value="ECO:0000250"/>
    <property type="project" value="UniProtKB"/>
</dbReference>
<dbReference type="GO" id="GO:0021879">
    <property type="term" value="P:forebrain neuron differentiation"/>
    <property type="evidence" value="ECO:0007669"/>
    <property type="project" value="Ensembl"/>
</dbReference>
<dbReference type="GO" id="GO:2001054">
    <property type="term" value="P:negative regulation of mesenchymal cell apoptotic process"/>
    <property type="evidence" value="ECO:0000250"/>
    <property type="project" value="UniProtKB"/>
</dbReference>
<dbReference type="GO" id="GO:0007605">
    <property type="term" value="P:sensory perception of sound"/>
    <property type="evidence" value="ECO:0007669"/>
    <property type="project" value="Ensembl"/>
</dbReference>
<dbReference type="CDD" id="cd00086">
    <property type="entry name" value="homeodomain"/>
    <property type="match status" value="1"/>
</dbReference>
<dbReference type="FunFam" id="1.10.10.60:FF:000005">
    <property type="entry name" value="POU domain protein"/>
    <property type="match status" value="1"/>
</dbReference>
<dbReference type="FunFam" id="1.10.260.40:FF:000001">
    <property type="entry name" value="POU domain protein"/>
    <property type="match status" value="1"/>
</dbReference>
<dbReference type="Gene3D" id="1.10.10.60">
    <property type="entry name" value="Homeodomain-like"/>
    <property type="match status" value="1"/>
</dbReference>
<dbReference type="Gene3D" id="1.10.260.40">
    <property type="entry name" value="lambda repressor-like DNA-binding domains"/>
    <property type="match status" value="1"/>
</dbReference>
<dbReference type="InterPro" id="IPR001356">
    <property type="entry name" value="HD"/>
</dbReference>
<dbReference type="InterPro" id="IPR017970">
    <property type="entry name" value="Homeobox_CS"/>
</dbReference>
<dbReference type="InterPro" id="IPR009057">
    <property type="entry name" value="Homeodomain-like_sf"/>
</dbReference>
<dbReference type="InterPro" id="IPR010982">
    <property type="entry name" value="Lambda_DNA-bd_dom_sf"/>
</dbReference>
<dbReference type="InterPro" id="IPR013847">
    <property type="entry name" value="POU"/>
</dbReference>
<dbReference type="InterPro" id="IPR000327">
    <property type="entry name" value="POU_dom"/>
</dbReference>
<dbReference type="InterPro" id="IPR050255">
    <property type="entry name" value="POU_domain_TF"/>
</dbReference>
<dbReference type="InterPro" id="IPR016362">
    <property type="entry name" value="TF_POU_3"/>
</dbReference>
<dbReference type="PANTHER" id="PTHR11636">
    <property type="entry name" value="POU DOMAIN"/>
    <property type="match status" value="1"/>
</dbReference>
<dbReference type="PANTHER" id="PTHR11636:SF83">
    <property type="entry name" value="POU DOMAIN, CLASS 3, TRANSCRIPTION FACTOR 4"/>
    <property type="match status" value="1"/>
</dbReference>
<dbReference type="Pfam" id="PF00046">
    <property type="entry name" value="Homeodomain"/>
    <property type="match status" value="1"/>
</dbReference>
<dbReference type="Pfam" id="PF00157">
    <property type="entry name" value="Pou"/>
    <property type="match status" value="1"/>
</dbReference>
<dbReference type="PIRSF" id="PIRSF002629">
    <property type="entry name" value="Transcription_factor_POU"/>
    <property type="match status" value="1"/>
</dbReference>
<dbReference type="PRINTS" id="PR00028">
    <property type="entry name" value="POUDOMAIN"/>
</dbReference>
<dbReference type="SMART" id="SM00389">
    <property type="entry name" value="HOX"/>
    <property type="match status" value="1"/>
</dbReference>
<dbReference type="SMART" id="SM00352">
    <property type="entry name" value="POU"/>
    <property type="match status" value="1"/>
</dbReference>
<dbReference type="SUPFAM" id="SSF46689">
    <property type="entry name" value="Homeodomain-like"/>
    <property type="match status" value="1"/>
</dbReference>
<dbReference type="SUPFAM" id="SSF47413">
    <property type="entry name" value="lambda repressor-like DNA-binding domains"/>
    <property type="match status" value="1"/>
</dbReference>
<dbReference type="PROSITE" id="PS00027">
    <property type="entry name" value="HOMEOBOX_1"/>
    <property type="match status" value="1"/>
</dbReference>
<dbReference type="PROSITE" id="PS50071">
    <property type="entry name" value="HOMEOBOX_2"/>
    <property type="match status" value="1"/>
</dbReference>
<dbReference type="PROSITE" id="PS00035">
    <property type="entry name" value="POU_1"/>
    <property type="match status" value="1"/>
</dbReference>
<dbReference type="PROSITE" id="PS00465">
    <property type="entry name" value="POU_2"/>
    <property type="match status" value="1"/>
</dbReference>
<dbReference type="PROSITE" id="PS51179">
    <property type="entry name" value="POU_3"/>
    <property type="match status" value="1"/>
</dbReference>
<keyword id="KW-0238">DNA-binding</keyword>
<keyword id="KW-0371">Homeobox</keyword>
<keyword id="KW-0539">Nucleus</keyword>
<keyword id="KW-0597">Phosphoprotein</keyword>
<keyword id="KW-1185">Reference proteome</keyword>
<keyword id="KW-0804">Transcription</keyword>
<keyword id="KW-0805">Transcription regulation</keyword>
<sequence length="361" mass="39413">MATAASNPYSILSSSSLVHADSAGMQQGSPFRNPQKLLQSDYLQGVPSNGHPLGHHWVTSLSDGGPWSSTLATSPLDQPDVKPGREDLQLGAIIHHRSPHVAHHSPHTNHPNAWGASPAPNSSITNSGQPLNVYSQPGFTVSGMLEHGGLTPPPAAASTQSLHPVLREPPDHGELGSHHCQDHSDEETPTSDELEQFAKQFKQRRIKLGFTQADVGLALGTLYGNVFSQTTICRFEALQLSFKNMCKLKPLLNKWLEEADSSTGSPTSIDKIAAQGRKRKKRTSIEVSVKGVLETHFLKCPKPAAQEISSLADSLQLEKEVVRVWFCNRRQKEKRMTPPGDQQPHEVYSHTVKTDASCHDL</sequence>
<name>PO3F4_MESAU</name>
<feature type="chain" id="PRO_0000100733" description="POU domain, class 3, transcription factor 4">
    <location>
        <begin position="1"/>
        <end position="361"/>
    </location>
</feature>
<feature type="domain" description="POU-specific" evidence="4">
    <location>
        <begin position="186"/>
        <end position="260"/>
    </location>
</feature>
<feature type="DNA-binding region" description="Homeobox" evidence="3">
    <location>
        <begin position="278"/>
        <end position="337"/>
    </location>
</feature>
<feature type="region of interest" description="Disordered" evidence="5">
    <location>
        <begin position="99"/>
        <end position="131"/>
    </location>
</feature>
<feature type="region of interest" description="Disordered" evidence="5">
    <location>
        <begin position="144"/>
        <end position="192"/>
    </location>
</feature>
<feature type="region of interest" description="Disordered" evidence="5">
    <location>
        <begin position="334"/>
        <end position="361"/>
    </location>
</feature>
<feature type="compositionally biased region" description="Polar residues" evidence="5">
    <location>
        <begin position="119"/>
        <end position="131"/>
    </location>
</feature>
<feature type="compositionally biased region" description="Basic and acidic residues" evidence="5">
    <location>
        <begin position="165"/>
        <end position="183"/>
    </location>
</feature>
<feature type="compositionally biased region" description="Basic and acidic residues" evidence="5">
    <location>
        <begin position="343"/>
        <end position="361"/>
    </location>
</feature>
<feature type="modified residue" description="Phosphoserine" evidence="2">
    <location>
        <position position="265"/>
    </location>
</feature>
<protein>
    <recommendedName>
        <fullName>POU domain, class 3, transcription factor 4</fullName>
    </recommendedName>
    <alternativeName>
        <fullName>Brain-specific homeobox/POU domain protein 4</fullName>
        <shortName>Brain-4</shortName>
        <shortName>Brn-4</shortName>
    </alternativeName>
</protein>
<reference key="1">
    <citation type="submission" date="2002-01" db="EMBL/GenBank/DDBJ databases">
        <title>Syrian hamster Brn-4 cDNA sequence.</title>
        <authorList>
            <person name="Jin T."/>
            <person name="Ma X."/>
            <person name="Wang P."/>
        </authorList>
    </citation>
    <scope>NUCLEOTIDE SEQUENCE [MRNA]</scope>
</reference>
<organism>
    <name type="scientific">Mesocricetus auratus</name>
    <name type="common">Golden hamster</name>
    <dbReference type="NCBI Taxonomy" id="10036"/>
    <lineage>
        <taxon>Eukaryota</taxon>
        <taxon>Metazoa</taxon>
        <taxon>Chordata</taxon>
        <taxon>Craniata</taxon>
        <taxon>Vertebrata</taxon>
        <taxon>Euteleostomi</taxon>
        <taxon>Mammalia</taxon>
        <taxon>Eutheria</taxon>
        <taxon>Euarchontoglires</taxon>
        <taxon>Glires</taxon>
        <taxon>Rodentia</taxon>
        <taxon>Myomorpha</taxon>
        <taxon>Muroidea</taxon>
        <taxon>Cricetidae</taxon>
        <taxon>Cricetinae</taxon>
        <taxon>Mesocricetus</taxon>
    </lineage>
</organism>
<accession>Q812B1</accession>
<gene>
    <name type="primary">Pou3f4</name>
    <name type="synonym">Brn-4</name>
    <name type="synonym">Brn4</name>
</gene>
<proteinExistence type="evidence at transcript level"/>